<proteinExistence type="inferred from homology"/>
<gene>
    <name evidence="1" type="primary">yciB</name>
    <name type="ordered locus">Lferr_0816</name>
</gene>
<keyword id="KW-0997">Cell inner membrane</keyword>
<keyword id="KW-1003">Cell membrane</keyword>
<keyword id="KW-0472">Membrane</keyword>
<keyword id="KW-0812">Transmembrane</keyword>
<keyword id="KW-1133">Transmembrane helix</keyword>
<organism>
    <name type="scientific">Acidithiobacillus ferrooxidans (strain ATCC 53993 / BNL-5-31)</name>
    <name type="common">Leptospirillum ferrooxidans (ATCC 53993)</name>
    <dbReference type="NCBI Taxonomy" id="380394"/>
    <lineage>
        <taxon>Bacteria</taxon>
        <taxon>Pseudomonadati</taxon>
        <taxon>Pseudomonadota</taxon>
        <taxon>Acidithiobacillia</taxon>
        <taxon>Acidithiobacillales</taxon>
        <taxon>Acidithiobacillaceae</taxon>
        <taxon>Acidithiobacillus</taxon>
    </lineage>
</organism>
<evidence type="ECO:0000255" key="1">
    <source>
        <dbReference type="HAMAP-Rule" id="MF_00189"/>
    </source>
</evidence>
<feature type="chain" id="PRO_1000098866" description="Inner membrane-spanning protein YciB">
    <location>
        <begin position="1"/>
        <end position="185"/>
    </location>
</feature>
<feature type="transmembrane region" description="Helical" evidence="1">
    <location>
        <begin position="19"/>
        <end position="39"/>
    </location>
</feature>
<feature type="transmembrane region" description="Helical" evidence="1">
    <location>
        <begin position="49"/>
        <end position="69"/>
    </location>
</feature>
<feature type="transmembrane region" description="Helical" evidence="1">
    <location>
        <begin position="72"/>
        <end position="92"/>
    </location>
</feature>
<feature type="transmembrane region" description="Helical" evidence="1">
    <location>
        <begin position="122"/>
        <end position="142"/>
    </location>
</feature>
<feature type="transmembrane region" description="Helical" evidence="1">
    <location>
        <begin position="150"/>
        <end position="170"/>
    </location>
</feature>
<sequence>MKLLTDFLPIILFFVAYRIHGIYTATEVLIVAAILLMAWQWWRRGRVETMTWVSTLLILTFGGLTLYFHNDTFIKIKPSILYVLFAAALLFTHWREEPLLQRLMGGQLPAALPLSFWRRLNGYWIAFFLFGAVLNLIVAYAFSTGIWVDFKLFGMLAITVIFVLFQAVVISRALPQEAKDGDSSA</sequence>
<dbReference type="EMBL" id="CP001132">
    <property type="protein sequence ID" value="ACH83066.1"/>
    <property type="molecule type" value="Genomic_DNA"/>
</dbReference>
<dbReference type="RefSeq" id="WP_009561407.1">
    <property type="nucleotide sequence ID" value="NC_011206.1"/>
</dbReference>
<dbReference type="KEGG" id="afe:Lferr_0816"/>
<dbReference type="eggNOG" id="COG2917">
    <property type="taxonomic scope" value="Bacteria"/>
</dbReference>
<dbReference type="HOGENOM" id="CLU_089554_2_0_6"/>
<dbReference type="GO" id="GO:0005886">
    <property type="term" value="C:plasma membrane"/>
    <property type="evidence" value="ECO:0007669"/>
    <property type="project" value="UniProtKB-SubCell"/>
</dbReference>
<dbReference type="HAMAP" id="MF_00189">
    <property type="entry name" value="YciB"/>
    <property type="match status" value="1"/>
</dbReference>
<dbReference type="InterPro" id="IPR006008">
    <property type="entry name" value="YciB"/>
</dbReference>
<dbReference type="NCBIfam" id="TIGR00997">
    <property type="entry name" value="ispZ"/>
    <property type="match status" value="1"/>
</dbReference>
<dbReference type="NCBIfam" id="NF001325">
    <property type="entry name" value="PRK00259.1-3"/>
    <property type="match status" value="1"/>
</dbReference>
<dbReference type="PANTHER" id="PTHR36917:SF1">
    <property type="entry name" value="INNER MEMBRANE-SPANNING PROTEIN YCIB"/>
    <property type="match status" value="1"/>
</dbReference>
<dbReference type="PANTHER" id="PTHR36917">
    <property type="entry name" value="INTRACELLULAR SEPTATION PROTEIN A-RELATED"/>
    <property type="match status" value="1"/>
</dbReference>
<dbReference type="Pfam" id="PF04279">
    <property type="entry name" value="IspA"/>
    <property type="match status" value="1"/>
</dbReference>
<accession>B5ENN2</accession>
<comment type="function">
    <text evidence="1">Plays a role in cell envelope biogenesis, maintenance of cell envelope integrity and membrane homeostasis.</text>
</comment>
<comment type="subcellular location">
    <subcellularLocation>
        <location evidence="1">Cell inner membrane</location>
        <topology evidence="1">Multi-pass membrane protein</topology>
    </subcellularLocation>
</comment>
<comment type="similarity">
    <text evidence="1">Belongs to the YciB family.</text>
</comment>
<name>YCIB_ACIF5</name>
<reference key="1">
    <citation type="submission" date="2008-08" db="EMBL/GenBank/DDBJ databases">
        <title>Complete sequence of Acidithiobacillus ferrooxidans ATCC 53993.</title>
        <authorList>
            <person name="Lucas S."/>
            <person name="Copeland A."/>
            <person name="Lapidus A."/>
            <person name="Glavina del Rio T."/>
            <person name="Dalin E."/>
            <person name="Tice H."/>
            <person name="Bruce D."/>
            <person name="Goodwin L."/>
            <person name="Pitluck S."/>
            <person name="Sims D."/>
            <person name="Brettin T."/>
            <person name="Detter J.C."/>
            <person name="Han C."/>
            <person name="Kuske C.R."/>
            <person name="Larimer F."/>
            <person name="Land M."/>
            <person name="Hauser L."/>
            <person name="Kyrpides N."/>
            <person name="Lykidis A."/>
            <person name="Borole A.P."/>
        </authorList>
    </citation>
    <scope>NUCLEOTIDE SEQUENCE [LARGE SCALE GENOMIC DNA]</scope>
    <source>
        <strain>ATCC 53993 / BNL-5-31</strain>
    </source>
</reference>
<protein>
    <recommendedName>
        <fullName evidence="1">Inner membrane-spanning protein YciB</fullName>
    </recommendedName>
</protein>